<organism>
    <name type="scientific">Leptospira borgpetersenii serovar Hardjo-bovis (strain L550)</name>
    <dbReference type="NCBI Taxonomy" id="355276"/>
    <lineage>
        <taxon>Bacteria</taxon>
        <taxon>Pseudomonadati</taxon>
        <taxon>Spirochaetota</taxon>
        <taxon>Spirochaetia</taxon>
        <taxon>Leptospirales</taxon>
        <taxon>Leptospiraceae</taxon>
        <taxon>Leptospira</taxon>
    </lineage>
</organism>
<feature type="chain" id="PRO_0000381444" description="Biotin synthase">
    <location>
        <begin position="1"/>
        <end position="358"/>
    </location>
</feature>
<feature type="domain" description="Radical SAM core" evidence="2">
    <location>
        <begin position="55"/>
        <end position="278"/>
    </location>
</feature>
<feature type="binding site" evidence="1">
    <location>
        <position position="70"/>
    </location>
    <ligand>
        <name>[4Fe-4S] cluster</name>
        <dbReference type="ChEBI" id="CHEBI:49883"/>
        <note>4Fe-4S-S-AdoMet</note>
    </ligand>
</feature>
<feature type="binding site" evidence="1">
    <location>
        <position position="74"/>
    </location>
    <ligand>
        <name>[4Fe-4S] cluster</name>
        <dbReference type="ChEBI" id="CHEBI:49883"/>
        <note>4Fe-4S-S-AdoMet</note>
    </ligand>
</feature>
<feature type="binding site" evidence="1">
    <location>
        <position position="77"/>
    </location>
    <ligand>
        <name>[4Fe-4S] cluster</name>
        <dbReference type="ChEBI" id="CHEBI:49883"/>
        <note>4Fe-4S-S-AdoMet</note>
    </ligand>
</feature>
<feature type="binding site" evidence="1">
    <location>
        <position position="114"/>
    </location>
    <ligand>
        <name>[2Fe-2S] cluster</name>
        <dbReference type="ChEBI" id="CHEBI:190135"/>
    </ligand>
</feature>
<feature type="binding site" evidence="1">
    <location>
        <position position="146"/>
    </location>
    <ligand>
        <name>[2Fe-2S] cluster</name>
        <dbReference type="ChEBI" id="CHEBI:190135"/>
    </ligand>
</feature>
<feature type="binding site" evidence="1">
    <location>
        <position position="206"/>
    </location>
    <ligand>
        <name>[2Fe-2S] cluster</name>
        <dbReference type="ChEBI" id="CHEBI:190135"/>
    </ligand>
</feature>
<feature type="binding site" evidence="1">
    <location>
        <position position="276"/>
    </location>
    <ligand>
        <name>[2Fe-2S] cluster</name>
        <dbReference type="ChEBI" id="CHEBI:190135"/>
    </ligand>
</feature>
<reference key="1">
    <citation type="journal article" date="2006" name="Proc. Natl. Acad. Sci. U.S.A.">
        <title>Genome reduction in Leptospira borgpetersenii reflects limited transmission potential.</title>
        <authorList>
            <person name="Bulach D.M."/>
            <person name="Zuerner R.L."/>
            <person name="Wilson P."/>
            <person name="Seemann T."/>
            <person name="McGrath A."/>
            <person name="Cullen P.A."/>
            <person name="Davis J."/>
            <person name="Johnson M."/>
            <person name="Kuczek E."/>
            <person name="Alt D.P."/>
            <person name="Peterson-Burch B."/>
            <person name="Coppel R.L."/>
            <person name="Rood J.I."/>
            <person name="Davies J.K."/>
            <person name="Adler B."/>
        </authorList>
    </citation>
    <scope>NUCLEOTIDE SEQUENCE [LARGE SCALE GENOMIC DNA]</scope>
    <source>
        <strain>L550</strain>
    </source>
</reference>
<sequence length="358" mass="39844">MSEKMYATLKTAEKIFSEISSVITKQEGLEILNGSIPLTTCLDKAFQERNRYFYNKVRIHILDNIKNGYCPEDCGYCAQRKNANSGIKEYPMKSEAEIYEDAVQAKKNGAYRFCMVTSGTGPNRLTTERLASTIRRITNELGMKVCLSAGLLDEEKAQVLKSAGLDRYNHNLNTSENHYPEICDTHTYAQRTQTLDSVSKAGIGMCSGVIVGMGESFQDIVDMAFELKSFRVISIPVNFFIPVKGHAIKNPGILTPELCVRILCLFRLVNPDSEIRIAAGREGHLRSLSAMALFAANSLFSSGYLNVKGSEIIETVTMIRDAGFVPELVDGGILPEESGTEMLYSEKNFPELYKFKKS</sequence>
<protein>
    <recommendedName>
        <fullName evidence="1">Biotin synthase</fullName>
        <ecNumber evidence="1">2.8.1.6</ecNumber>
    </recommendedName>
</protein>
<evidence type="ECO:0000255" key="1">
    <source>
        <dbReference type="HAMAP-Rule" id="MF_01694"/>
    </source>
</evidence>
<evidence type="ECO:0000255" key="2">
    <source>
        <dbReference type="PROSITE-ProRule" id="PRU01266"/>
    </source>
</evidence>
<name>BIOB_LEPBL</name>
<gene>
    <name evidence="1" type="primary">bioB</name>
    <name type="ordered locus">LBL_1414</name>
</gene>
<accession>Q051U2</accession>
<dbReference type="EC" id="2.8.1.6" evidence="1"/>
<dbReference type="EMBL" id="CP000348">
    <property type="protein sequence ID" value="ABJ78903.1"/>
    <property type="molecule type" value="Genomic_DNA"/>
</dbReference>
<dbReference type="SMR" id="Q051U2"/>
<dbReference type="KEGG" id="lbl:LBL_1414"/>
<dbReference type="HOGENOM" id="CLU_033172_2_1_12"/>
<dbReference type="UniPathway" id="UPA00078">
    <property type="reaction ID" value="UER00162"/>
</dbReference>
<dbReference type="GO" id="GO:0051537">
    <property type="term" value="F:2 iron, 2 sulfur cluster binding"/>
    <property type="evidence" value="ECO:0007669"/>
    <property type="project" value="UniProtKB-KW"/>
</dbReference>
<dbReference type="GO" id="GO:0051539">
    <property type="term" value="F:4 iron, 4 sulfur cluster binding"/>
    <property type="evidence" value="ECO:0007669"/>
    <property type="project" value="UniProtKB-KW"/>
</dbReference>
<dbReference type="GO" id="GO:0004076">
    <property type="term" value="F:biotin synthase activity"/>
    <property type="evidence" value="ECO:0007669"/>
    <property type="project" value="UniProtKB-UniRule"/>
</dbReference>
<dbReference type="GO" id="GO:0005506">
    <property type="term" value="F:iron ion binding"/>
    <property type="evidence" value="ECO:0007669"/>
    <property type="project" value="UniProtKB-UniRule"/>
</dbReference>
<dbReference type="GO" id="GO:0009102">
    <property type="term" value="P:biotin biosynthetic process"/>
    <property type="evidence" value="ECO:0007669"/>
    <property type="project" value="UniProtKB-UniRule"/>
</dbReference>
<dbReference type="CDD" id="cd01335">
    <property type="entry name" value="Radical_SAM"/>
    <property type="match status" value="1"/>
</dbReference>
<dbReference type="FunFam" id="3.20.20.70:FF:000026">
    <property type="entry name" value="Biotin synthase"/>
    <property type="match status" value="1"/>
</dbReference>
<dbReference type="Gene3D" id="3.20.20.70">
    <property type="entry name" value="Aldolase class I"/>
    <property type="match status" value="1"/>
</dbReference>
<dbReference type="HAMAP" id="MF_01694">
    <property type="entry name" value="BioB"/>
    <property type="match status" value="1"/>
</dbReference>
<dbReference type="InterPro" id="IPR013785">
    <property type="entry name" value="Aldolase_TIM"/>
</dbReference>
<dbReference type="InterPro" id="IPR010722">
    <property type="entry name" value="BATS_dom"/>
</dbReference>
<dbReference type="InterPro" id="IPR002684">
    <property type="entry name" value="Biotin_synth/BioAB"/>
</dbReference>
<dbReference type="InterPro" id="IPR024177">
    <property type="entry name" value="Biotin_synthase"/>
</dbReference>
<dbReference type="InterPro" id="IPR006638">
    <property type="entry name" value="Elp3/MiaA/NifB-like_rSAM"/>
</dbReference>
<dbReference type="InterPro" id="IPR007197">
    <property type="entry name" value="rSAM"/>
</dbReference>
<dbReference type="NCBIfam" id="TIGR00433">
    <property type="entry name" value="bioB"/>
    <property type="match status" value="1"/>
</dbReference>
<dbReference type="PANTHER" id="PTHR22976">
    <property type="entry name" value="BIOTIN SYNTHASE"/>
    <property type="match status" value="1"/>
</dbReference>
<dbReference type="PANTHER" id="PTHR22976:SF2">
    <property type="entry name" value="BIOTIN SYNTHASE, MITOCHONDRIAL"/>
    <property type="match status" value="1"/>
</dbReference>
<dbReference type="Pfam" id="PF06968">
    <property type="entry name" value="BATS"/>
    <property type="match status" value="1"/>
</dbReference>
<dbReference type="Pfam" id="PF04055">
    <property type="entry name" value="Radical_SAM"/>
    <property type="match status" value="1"/>
</dbReference>
<dbReference type="PIRSF" id="PIRSF001619">
    <property type="entry name" value="Biotin_synth"/>
    <property type="match status" value="1"/>
</dbReference>
<dbReference type="SFLD" id="SFLDG01060">
    <property type="entry name" value="BATS_domain_containing"/>
    <property type="match status" value="1"/>
</dbReference>
<dbReference type="SFLD" id="SFLDG01278">
    <property type="entry name" value="biotin_synthase_like"/>
    <property type="match status" value="1"/>
</dbReference>
<dbReference type="SMART" id="SM00876">
    <property type="entry name" value="BATS"/>
    <property type="match status" value="1"/>
</dbReference>
<dbReference type="SMART" id="SM00729">
    <property type="entry name" value="Elp3"/>
    <property type="match status" value="1"/>
</dbReference>
<dbReference type="SUPFAM" id="SSF102114">
    <property type="entry name" value="Radical SAM enzymes"/>
    <property type="match status" value="1"/>
</dbReference>
<dbReference type="PROSITE" id="PS51918">
    <property type="entry name" value="RADICAL_SAM"/>
    <property type="match status" value="1"/>
</dbReference>
<comment type="function">
    <text evidence="1">Catalyzes the conversion of dethiobiotin (DTB) to biotin by the insertion of a sulfur atom into dethiobiotin via a radical-based mechanism.</text>
</comment>
<comment type="catalytic activity">
    <reaction evidence="1">
        <text>(4R,5S)-dethiobiotin + (sulfur carrier)-SH + 2 reduced [2Fe-2S]-[ferredoxin] + 2 S-adenosyl-L-methionine = (sulfur carrier)-H + biotin + 2 5'-deoxyadenosine + 2 L-methionine + 2 oxidized [2Fe-2S]-[ferredoxin]</text>
        <dbReference type="Rhea" id="RHEA:22060"/>
        <dbReference type="Rhea" id="RHEA-COMP:10000"/>
        <dbReference type="Rhea" id="RHEA-COMP:10001"/>
        <dbReference type="Rhea" id="RHEA-COMP:14737"/>
        <dbReference type="Rhea" id="RHEA-COMP:14739"/>
        <dbReference type="ChEBI" id="CHEBI:17319"/>
        <dbReference type="ChEBI" id="CHEBI:29917"/>
        <dbReference type="ChEBI" id="CHEBI:33737"/>
        <dbReference type="ChEBI" id="CHEBI:33738"/>
        <dbReference type="ChEBI" id="CHEBI:57586"/>
        <dbReference type="ChEBI" id="CHEBI:57844"/>
        <dbReference type="ChEBI" id="CHEBI:59789"/>
        <dbReference type="ChEBI" id="CHEBI:64428"/>
        <dbReference type="ChEBI" id="CHEBI:149473"/>
        <dbReference type="EC" id="2.8.1.6"/>
    </reaction>
</comment>
<comment type="cofactor">
    <cofactor evidence="1">
        <name>[4Fe-4S] cluster</name>
        <dbReference type="ChEBI" id="CHEBI:49883"/>
    </cofactor>
    <text evidence="1">Binds 1 [4Fe-4S] cluster. The cluster is coordinated with 3 cysteines and an exchangeable S-adenosyl-L-methionine.</text>
</comment>
<comment type="cofactor">
    <cofactor evidence="1">
        <name>[2Fe-2S] cluster</name>
        <dbReference type="ChEBI" id="CHEBI:190135"/>
    </cofactor>
    <text evidence="1">Binds 1 [2Fe-2S] cluster. The cluster is coordinated with 3 cysteines and 1 arginine.</text>
</comment>
<comment type="pathway">
    <text evidence="1">Cofactor biosynthesis; biotin biosynthesis; biotin from 7,8-diaminononanoate: step 2/2.</text>
</comment>
<comment type="subunit">
    <text evidence="1">Homodimer.</text>
</comment>
<comment type="similarity">
    <text evidence="1">Belongs to the radical SAM superfamily. Biotin synthase family.</text>
</comment>
<keyword id="KW-0001">2Fe-2S</keyword>
<keyword id="KW-0004">4Fe-4S</keyword>
<keyword id="KW-0093">Biotin biosynthesis</keyword>
<keyword id="KW-0408">Iron</keyword>
<keyword id="KW-0411">Iron-sulfur</keyword>
<keyword id="KW-0479">Metal-binding</keyword>
<keyword id="KW-0949">S-adenosyl-L-methionine</keyword>
<keyword id="KW-0808">Transferase</keyword>
<proteinExistence type="inferred from homology"/>